<name>APOA5_MOUSE</name>
<protein>
    <recommendedName>
        <fullName>Apolipoprotein A-V</fullName>
        <shortName>Apo-AV</shortName>
        <shortName>ApoA-V</shortName>
    </recommendedName>
    <alternativeName>
        <fullName>Apolipoprotein A5</fullName>
    </alternativeName>
    <alternativeName>
        <fullName>Regeneration-associated protein 3</fullName>
    </alternativeName>
</protein>
<comment type="function">
    <text evidence="1 5 6">Minor apolipoprotein mainly associated with HDL and to a lesser extent with VLDL. May also be associated with chylomicrons. Important determinant of plasma triglyceride (TG) levels by both being a potent stimulator of apo-CII lipoprotein lipase (LPL) TG hydrolysis and an inhibitor of the hepatic VLDL-TG production rate (without affecting the VLDL-apoB production rate). Activates poorly lecithin:cholesterol acyltransferase (LCAT) and does not enhance efflux of cholesterol from macrophages (By similarity). Binds heparin (By similarity).</text>
</comment>
<comment type="subunit">
    <text evidence="1">Interacts with GPIHBP1 (By similarity). Interacts with SORL1; this interaction leads to APOA5 internalization and sorting either to lysosomes and degradation, or to the trans-Golgi network (By similarity).</text>
</comment>
<comment type="subcellular location">
    <subcellularLocation>
        <location evidence="4">Secreted</location>
    </subcellularLocation>
    <subcellularLocation>
        <location evidence="1">Early endosome</location>
    </subcellularLocation>
    <subcellularLocation>
        <location evidence="1">Late endosome</location>
    </subcellularLocation>
    <subcellularLocation>
        <location evidence="1">Golgi apparatus</location>
        <location evidence="1">trans-Golgi network</location>
    </subcellularLocation>
    <text evidence="1">In the presence of SORL1, internalized to early endosomes, sorted in a retrograde fashion to late endosomes, from which a portion is sent to lysosomes and degradation, another portion is sorted to the trans-Golgi network.</text>
</comment>
<comment type="tissue specificity">
    <text evidence="4 5">Liver.</text>
</comment>
<comment type="induction">
    <text>Induced in early phase of liver regeneration.</text>
</comment>
<comment type="PTM">
    <text evidence="1">Phosphorylated by FAM20C in the extracellular medium.</text>
</comment>
<comment type="miscellaneous">
    <text>Mice expressing the human APOAV transgene show a decrease in plasma TG by one third. Conversely, knockout mice lacking APOAV have a four time increase in plasma TG.</text>
</comment>
<comment type="similarity">
    <text evidence="7">Belongs to the apolipoprotein A1/A4/E family.</text>
</comment>
<feature type="signal peptide" evidence="2">
    <location>
        <begin position="1"/>
        <end position="20"/>
    </location>
</feature>
<feature type="chain" id="PRO_0000001982" description="Apolipoprotein A-V">
    <location>
        <begin position="21"/>
        <end position="368"/>
    </location>
</feature>
<feature type="region of interest" description="Disordered" evidence="3">
    <location>
        <begin position="305"/>
        <end position="333"/>
    </location>
</feature>
<feature type="coiled-coil region" evidence="2">
    <location>
        <begin position="231"/>
        <end position="255"/>
    </location>
</feature>
<feature type="modified residue" description="Phosphoserine" evidence="8 9">
    <location>
        <position position="52"/>
    </location>
</feature>
<feature type="sequence conflict" description="In Ref. 1; AAG49600." evidence="7" ref="1">
    <original>G</original>
    <variation>D</variation>
    <location>
        <position position="86"/>
    </location>
</feature>
<feature type="sequence conflict" description="In Ref. 3; AAH11198." evidence="7" ref="3">
    <original>HT</original>
    <variation>QA</variation>
    <location>
        <begin position="178"/>
        <end position="179"/>
    </location>
</feature>
<feature type="sequence conflict" description="In Ref. 3; AAH11198." evidence="7" ref="3">
    <original>V</original>
    <variation>L</variation>
    <location>
        <position position="278"/>
    </location>
</feature>
<sequence length="368" mass="41262">MAAVITWALALLAVFASTQARKSLWDYFSQNSWSKGVMGQPQKLAQENLKGSFEQDLYNMNNYLEKLGPLRGPGKEPPLLAQDPEGIRKQLQQELGEVSSRLEPYMAAKHQQVGWNLEGLRQQLKPYTAELMEQVGLSVQELQEQLRVVGEDTKAQLLGGVDEALNLLQDMQSRVLHHTDRVKELFHPYAERLVTGIGHHVQELHRSVAPHAAASPARLSRCVQTLSHKLTRKAKDLHTSIQRNLDQLRDELSAFIRVSTDGAEDGDSLDPQALSEEVRQRLQAFRHDTYLQIAAFTQAIDQETEEIQHQLAPPPPSHSAFAPELGHSDSNKALSRLQSRLDDLWEDIAYGLQDQGHSHLSDPEGHSG</sequence>
<gene>
    <name type="primary">Apoa5</name>
    <name type="synonym">Rap3</name>
</gene>
<accession>Q8C7G5</accession>
<accession>Q91X90</accession>
<accession>Q99P64</accession>
<dbReference type="EMBL" id="AF327059">
    <property type="protein sequence ID" value="AAG49600.1"/>
    <property type="molecule type" value="mRNA"/>
</dbReference>
<dbReference type="EMBL" id="AK050280">
    <property type="protein sequence ID" value="BAC34163.1"/>
    <property type="molecule type" value="mRNA"/>
</dbReference>
<dbReference type="EMBL" id="BC011198">
    <property type="protein sequence ID" value="AAH11198.1"/>
    <property type="molecule type" value="mRNA"/>
</dbReference>
<dbReference type="CCDS" id="CCDS23143.1"/>
<dbReference type="RefSeq" id="NP_001335024.1">
    <property type="nucleotide sequence ID" value="NM_001348095.1"/>
</dbReference>
<dbReference type="RefSeq" id="NP_536682.2">
    <property type="nucleotide sequence ID" value="NM_080434.4"/>
</dbReference>
<dbReference type="RefSeq" id="XP_006510601.1">
    <property type="nucleotide sequence ID" value="XM_006510538.3"/>
</dbReference>
<dbReference type="SMR" id="Q8C7G5"/>
<dbReference type="BioGRID" id="211223">
    <property type="interactions" value="1"/>
</dbReference>
<dbReference type="FunCoup" id="Q8C7G5">
    <property type="interactions" value="110"/>
</dbReference>
<dbReference type="STRING" id="10090.ENSMUSP00000113413"/>
<dbReference type="iPTMnet" id="Q8C7G5"/>
<dbReference type="PhosphoSitePlus" id="Q8C7G5"/>
<dbReference type="CPTAC" id="non-CPTAC-3559"/>
<dbReference type="jPOST" id="Q8C7G5"/>
<dbReference type="PaxDb" id="10090-ENSMUSP00000113413"/>
<dbReference type="PeptideAtlas" id="Q8C7G5"/>
<dbReference type="ProteomicsDB" id="296336"/>
<dbReference type="Antibodypedia" id="32277">
    <property type="antibodies" value="771 antibodies from 32 providers"/>
</dbReference>
<dbReference type="DNASU" id="66113"/>
<dbReference type="Ensembl" id="ENSMUST00000034584.4">
    <property type="protein sequence ID" value="ENSMUSP00000034584.4"/>
    <property type="gene ID" value="ENSMUSG00000032079.13"/>
</dbReference>
<dbReference type="Ensembl" id="ENSMUST00000121598.8">
    <property type="protein sequence ID" value="ENSMUSP00000113413.2"/>
    <property type="gene ID" value="ENSMUSG00000032079.13"/>
</dbReference>
<dbReference type="GeneID" id="66113"/>
<dbReference type="KEGG" id="mmu:66113"/>
<dbReference type="UCSC" id="uc009phf.1">
    <property type="organism name" value="mouse"/>
</dbReference>
<dbReference type="AGR" id="MGI:1913363"/>
<dbReference type="CTD" id="116519"/>
<dbReference type="MGI" id="MGI:1913363">
    <property type="gene designation" value="Apoa5"/>
</dbReference>
<dbReference type="VEuPathDB" id="HostDB:ENSMUSG00000032079"/>
<dbReference type="eggNOG" id="ENOG502S33P">
    <property type="taxonomic scope" value="Eukaryota"/>
</dbReference>
<dbReference type="GeneTree" id="ENSGT00950000182929"/>
<dbReference type="HOGENOM" id="CLU_747959_0_0_1"/>
<dbReference type="InParanoid" id="Q8C7G5"/>
<dbReference type="OMA" id="HERVGWN"/>
<dbReference type="OrthoDB" id="9886755at2759"/>
<dbReference type="PhylomeDB" id="Q8C7G5"/>
<dbReference type="TreeFam" id="TF334458"/>
<dbReference type="Reactome" id="R-MMU-381426">
    <property type="pathway name" value="Regulation of Insulin-like Growth Factor (IGF) transport and uptake by Insulin-like Growth Factor Binding Proteins (IGFBPs)"/>
</dbReference>
<dbReference type="Reactome" id="R-MMU-8957275">
    <property type="pathway name" value="Post-translational protein phosphorylation"/>
</dbReference>
<dbReference type="Reactome" id="R-MMU-8963901">
    <property type="pathway name" value="Chylomicron remodeling"/>
</dbReference>
<dbReference type="BioGRID-ORCS" id="66113">
    <property type="hits" value="1 hit in 80 CRISPR screens"/>
</dbReference>
<dbReference type="ChiTaRS" id="Apoa5">
    <property type="organism name" value="mouse"/>
</dbReference>
<dbReference type="PRO" id="PR:Q8C7G5"/>
<dbReference type="Proteomes" id="UP000000589">
    <property type="component" value="Chromosome 9"/>
</dbReference>
<dbReference type="RNAct" id="Q8C7G5">
    <property type="molecule type" value="protein"/>
</dbReference>
<dbReference type="Bgee" id="ENSMUSG00000032079">
    <property type="expression patterns" value="Expressed in left lobe of liver and 43 other cell types or tissues"/>
</dbReference>
<dbReference type="ExpressionAtlas" id="Q8C7G5">
    <property type="expression patterns" value="baseline and differential"/>
</dbReference>
<dbReference type="GO" id="GO:0042627">
    <property type="term" value="C:chylomicron"/>
    <property type="evidence" value="ECO:0007669"/>
    <property type="project" value="UniProtKB-KW"/>
</dbReference>
<dbReference type="GO" id="GO:0005829">
    <property type="term" value="C:cytosol"/>
    <property type="evidence" value="ECO:0000304"/>
    <property type="project" value="Reactome"/>
</dbReference>
<dbReference type="GO" id="GO:0005769">
    <property type="term" value="C:early endosome"/>
    <property type="evidence" value="ECO:0007669"/>
    <property type="project" value="UniProtKB-SubCell"/>
</dbReference>
<dbReference type="GO" id="GO:0005794">
    <property type="term" value="C:Golgi apparatus"/>
    <property type="evidence" value="ECO:0007669"/>
    <property type="project" value="UniProtKB-SubCell"/>
</dbReference>
<dbReference type="GO" id="GO:0034364">
    <property type="term" value="C:high-density lipoprotein particle"/>
    <property type="evidence" value="ECO:0007669"/>
    <property type="project" value="UniProtKB-KW"/>
</dbReference>
<dbReference type="GO" id="GO:0005770">
    <property type="term" value="C:late endosome"/>
    <property type="evidence" value="ECO:0007669"/>
    <property type="project" value="UniProtKB-SubCell"/>
</dbReference>
<dbReference type="GO" id="GO:0034361">
    <property type="term" value="C:very-low-density lipoprotein particle"/>
    <property type="evidence" value="ECO:0007669"/>
    <property type="project" value="UniProtKB-KW"/>
</dbReference>
<dbReference type="GO" id="GO:0008201">
    <property type="term" value="F:heparin binding"/>
    <property type="evidence" value="ECO:0007669"/>
    <property type="project" value="Ensembl"/>
</dbReference>
<dbReference type="GO" id="GO:0035473">
    <property type="term" value="F:lipase binding"/>
    <property type="evidence" value="ECO:0007669"/>
    <property type="project" value="Ensembl"/>
</dbReference>
<dbReference type="GO" id="GO:0060230">
    <property type="term" value="F:lipoprotein lipase activator activity"/>
    <property type="evidence" value="ECO:0007669"/>
    <property type="project" value="Ensembl"/>
</dbReference>
<dbReference type="GO" id="GO:0050750">
    <property type="term" value="F:low-density lipoprotein particle receptor binding"/>
    <property type="evidence" value="ECO:0007669"/>
    <property type="project" value="Ensembl"/>
</dbReference>
<dbReference type="GO" id="GO:0031210">
    <property type="term" value="F:phosphatidylcholine binding"/>
    <property type="evidence" value="ECO:0007669"/>
    <property type="project" value="Ensembl"/>
</dbReference>
<dbReference type="GO" id="GO:0055090">
    <property type="term" value="P:acylglycerol homeostasis"/>
    <property type="evidence" value="ECO:0000315"/>
    <property type="project" value="BHF-UCL"/>
</dbReference>
<dbReference type="GO" id="GO:0042632">
    <property type="term" value="P:cholesterol homeostasis"/>
    <property type="evidence" value="ECO:0007669"/>
    <property type="project" value="Ensembl"/>
</dbReference>
<dbReference type="GO" id="GO:0006869">
    <property type="term" value="P:lipid transport"/>
    <property type="evidence" value="ECO:0007669"/>
    <property type="project" value="UniProtKB-KW"/>
</dbReference>
<dbReference type="GO" id="GO:0042157">
    <property type="term" value="P:lipoprotein metabolic process"/>
    <property type="evidence" value="ECO:0007669"/>
    <property type="project" value="InterPro"/>
</dbReference>
<dbReference type="GO" id="GO:0045723">
    <property type="term" value="P:positive regulation of fatty acid biosynthetic process"/>
    <property type="evidence" value="ECO:0007669"/>
    <property type="project" value="Ensembl"/>
</dbReference>
<dbReference type="GO" id="GO:0010898">
    <property type="term" value="P:positive regulation of triglyceride catabolic process"/>
    <property type="evidence" value="ECO:0007669"/>
    <property type="project" value="Ensembl"/>
</dbReference>
<dbReference type="GO" id="GO:0010902">
    <property type="term" value="P:positive regulation of very-low-density lipoprotein particle remodeling"/>
    <property type="evidence" value="ECO:0007669"/>
    <property type="project" value="Ensembl"/>
</dbReference>
<dbReference type="GO" id="GO:0042246">
    <property type="term" value="P:tissue regeneration"/>
    <property type="evidence" value="ECO:0007669"/>
    <property type="project" value="Ensembl"/>
</dbReference>
<dbReference type="GO" id="GO:0019433">
    <property type="term" value="P:triglyceride catabolic process"/>
    <property type="evidence" value="ECO:0007669"/>
    <property type="project" value="Ensembl"/>
</dbReference>
<dbReference type="GO" id="GO:0070328">
    <property type="term" value="P:triglyceride homeostasis"/>
    <property type="evidence" value="ECO:0007669"/>
    <property type="project" value="Ensembl"/>
</dbReference>
<dbReference type="GO" id="GO:0006641">
    <property type="term" value="P:triglyceride metabolic process"/>
    <property type="evidence" value="ECO:0000315"/>
    <property type="project" value="MGI"/>
</dbReference>
<dbReference type="GO" id="GO:0034370">
    <property type="term" value="P:triglyceride-rich lipoprotein particle remodeling"/>
    <property type="evidence" value="ECO:0000315"/>
    <property type="project" value="MGI"/>
</dbReference>
<dbReference type="GO" id="GO:0034447">
    <property type="term" value="P:very-low-density lipoprotein particle clearance"/>
    <property type="evidence" value="ECO:0007669"/>
    <property type="project" value="Ensembl"/>
</dbReference>
<dbReference type="FunFam" id="1.20.120.20:FF:000006">
    <property type="entry name" value="Apolipoprotein A-V"/>
    <property type="match status" value="1"/>
</dbReference>
<dbReference type="Gene3D" id="1.20.120.20">
    <property type="entry name" value="Apolipoprotein"/>
    <property type="match status" value="2"/>
</dbReference>
<dbReference type="InterPro" id="IPR000074">
    <property type="entry name" value="ApoA_E"/>
</dbReference>
<dbReference type="InterPro" id="IPR050163">
    <property type="entry name" value="Apolipoprotein_A1/A4/E"/>
</dbReference>
<dbReference type="PANTHER" id="PTHR18976">
    <property type="entry name" value="APOLIPOPROTEIN"/>
    <property type="match status" value="1"/>
</dbReference>
<dbReference type="PANTHER" id="PTHR18976:SF13">
    <property type="entry name" value="APOLIPOPROTEIN A-V"/>
    <property type="match status" value="1"/>
</dbReference>
<dbReference type="Pfam" id="PF01442">
    <property type="entry name" value="Apolipoprotein"/>
    <property type="match status" value="1"/>
</dbReference>
<dbReference type="SUPFAM" id="SSF58113">
    <property type="entry name" value="Apolipoprotein A-I"/>
    <property type="match status" value="1"/>
</dbReference>
<reference key="1">
    <citation type="journal article" date="2001" name="J. Biol. Chem.">
        <title>Apolipoprotein A-V. A novel apolipoprotein associated with an early phase of liver regeneration.</title>
        <authorList>
            <person name="van Der Vliet H.N."/>
            <person name="Sammels M.G."/>
            <person name="Leegwater A.C.J."/>
            <person name="Levels J.H.M."/>
            <person name="Reitsma P.H."/>
            <person name="Boers W."/>
            <person name="Chamuleau R.A.F.M."/>
        </authorList>
    </citation>
    <scope>NUCLEOTIDE SEQUENCE [MRNA]</scope>
    <scope>TISSUE SPECIFICITY</scope>
    <scope>SUBCELLULAR LOCATION</scope>
    <source>
        <strain>C57BL/6J</strain>
        <tissue>Liver</tissue>
    </source>
</reference>
<reference key="2">
    <citation type="journal article" date="2005" name="Science">
        <title>The transcriptional landscape of the mammalian genome.</title>
        <authorList>
            <person name="Carninci P."/>
            <person name="Kasukawa T."/>
            <person name="Katayama S."/>
            <person name="Gough J."/>
            <person name="Frith M.C."/>
            <person name="Maeda N."/>
            <person name="Oyama R."/>
            <person name="Ravasi T."/>
            <person name="Lenhard B."/>
            <person name="Wells C."/>
            <person name="Kodzius R."/>
            <person name="Shimokawa K."/>
            <person name="Bajic V.B."/>
            <person name="Brenner S.E."/>
            <person name="Batalov S."/>
            <person name="Forrest A.R."/>
            <person name="Zavolan M."/>
            <person name="Davis M.J."/>
            <person name="Wilming L.G."/>
            <person name="Aidinis V."/>
            <person name="Allen J.E."/>
            <person name="Ambesi-Impiombato A."/>
            <person name="Apweiler R."/>
            <person name="Aturaliya R.N."/>
            <person name="Bailey T.L."/>
            <person name="Bansal M."/>
            <person name="Baxter L."/>
            <person name="Beisel K.W."/>
            <person name="Bersano T."/>
            <person name="Bono H."/>
            <person name="Chalk A.M."/>
            <person name="Chiu K.P."/>
            <person name="Choudhary V."/>
            <person name="Christoffels A."/>
            <person name="Clutterbuck D.R."/>
            <person name="Crowe M.L."/>
            <person name="Dalla E."/>
            <person name="Dalrymple B.P."/>
            <person name="de Bono B."/>
            <person name="Della Gatta G."/>
            <person name="di Bernardo D."/>
            <person name="Down T."/>
            <person name="Engstrom P."/>
            <person name="Fagiolini M."/>
            <person name="Faulkner G."/>
            <person name="Fletcher C.F."/>
            <person name="Fukushima T."/>
            <person name="Furuno M."/>
            <person name="Futaki S."/>
            <person name="Gariboldi M."/>
            <person name="Georgii-Hemming P."/>
            <person name="Gingeras T.R."/>
            <person name="Gojobori T."/>
            <person name="Green R.E."/>
            <person name="Gustincich S."/>
            <person name="Harbers M."/>
            <person name="Hayashi Y."/>
            <person name="Hensch T.K."/>
            <person name="Hirokawa N."/>
            <person name="Hill D."/>
            <person name="Huminiecki L."/>
            <person name="Iacono M."/>
            <person name="Ikeo K."/>
            <person name="Iwama A."/>
            <person name="Ishikawa T."/>
            <person name="Jakt M."/>
            <person name="Kanapin A."/>
            <person name="Katoh M."/>
            <person name="Kawasawa Y."/>
            <person name="Kelso J."/>
            <person name="Kitamura H."/>
            <person name="Kitano H."/>
            <person name="Kollias G."/>
            <person name="Krishnan S.P."/>
            <person name="Kruger A."/>
            <person name="Kummerfeld S.K."/>
            <person name="Kurochkin I.V."/>
            <person name="Lareau L.F."/>
            <person name="Lazarevic D."/>
            <person name="Lipovich L."/>
            <person name="Liu J."/>
            <person name="Liuni S."/>
            <person name="McWilliam S."/>
            <person name="Madan Babu M."/>
            <person name="Madera M."/>
            <person name="Marchionni L."/>
            <person name="Matsuda H."/>
            <person name="Matsuzawa S."/>
            <person name="Miki H."/>
            <person name="Mignone F."/>
            <person name="Miyake S."/>
            <person name="Morris K."/>
            <person name="Mottagui-Tabar S."/>
            <person name="Mulder N."/>
            <person name="Nakano N."/>
            <person name="Nakauchi H."/>
            <person name="Ng P."/>
            <person name="Nilsson R."/>
            <person name="Nishiguchi S."/>
            <person name="Nishikawa S."/>
            <person name="Nori F."/>
            <person name="Ohara O."/>
            <person name="Okazaki Y."/>
            <person name="Orlando V."/>
            <person name="Pang K.C."/>
            <person name="Pavan W.J."/>
            <person name="Pavesi G."/>
            <person name="Pesole G."/>
            <person name="Petrovsky N."/>
            <person name="Piazza S."/>
            <person name="Reed J."/>
            <person name="Reid J.F."/>
            <person name="Ring B.Z."/>
            <person name="Ringwald M."/>
            <person name="Rost B."/>
            <person name="Ruan Y."/>
            <person name="Salzberg S.L."/>
            <person name="Sandelin A."/>
            <person name="Schneider C."/>
            <person name="Schoenbach C."/>
            <person name="Sekiguchi K."/>
            <person name="Semple C.A."/>
            <person name="Seno S."/>
            <person name="Sessa L."/>
            <person name="Sheng Y."/>
            <person name="Shibata Y."/>
            <person name="Shimada H."/>
            <person name="Shimada K."/>
            <person name="Silva D."/>
            <person name="Sinclair B."/>
            <person name="Sperling S."/>
            <person name="Stupka E."/>
            <person name="Sugiura K."/>
            <person name="Sultana R."/>
            <person name="Takenaka Y."/>
            <person name="Taki K."/>
            <person name="Tammoja K."/>
            <person name="Tan S.L."/>
            <person name="Tang S."/>
            <person name="Taylor M.S."/>
            <person name="Tegner J."/>
            <person name="Teichmann S.A."/>
            <person name="Ueda H.R."/>
            <person name="van Nimwegen E."/>
            <person name="Verardo R."/>
            <person name="Wei C.L."/>
            <person name="Yagi K."/>
            <person name="Yamanishi H."/>
            <person name="Zabarovsky E."/>
            <person name="Zhu S."/>
            <person name="Zimmer A."/>
            <person name="Hide W."/>
            <person name="Bult C."/>
            <person name="Grimmond S.M."/>
            <person name="Teasdale R.D."/>
            <person name="Liu E.T."/>
            <person name="Brusic V."/>
            <person name="Quackenbush J."/>
            <person name="Wahlestedt C."/>
            <person name="Mattick J.S."/>
            <person name="Hume D.A."/>
            <person name="Kai C."/>
            <person name="Sasaki D."/>
            <person name="Tomaru Y."/>
            <person name="Fukuda S."/>
            <person name="Kanamori-Katayama M."/>
            <person name="Suzuki M."/>
            <person name="Aoki J."/>
            <person name="Arakawa T."/>
            <person name="Iida J."/>
            <person name="Imamura K."/>
            <person name="Itoh M."/>
            <person name="Kato T."/>
            <person name="Kawaji H."/>
            <person name="Kawagashira N."/>
            <person name="Kawashima T."/>
            <person name="Kojima M."/>
            <person name="Kondo S."/>
            <person name="Konno H."/>
            <person name="Nakano K."/>
            <person name="Ninomiya N."/>
            <person name="Nishio T."/>
            <person name="Okada M."/>
            <person name="Plessy C."/>
            <person name="Shibata K."/>
            <person name="Shiraki T."/>
            <person name="Suzuki S."/>
            <person name="Tagami M."/>
            <person name="Waki K."/>
            <person name="Watahiki A."/>
            <person name="Okamura-Oho Y."/>
            <person name="Suzuki H."/>
            <person name="Kawai J."/>
            <person name="Hayashizaki Y."/>
        </authorList>
    </citation>
    <scope>NUCLEOTIDE SEQUENCE [LARGE SCALE MRNA]</scope>
    <source>
        <strain>C57BL/6J</strain>
        <tissue>Liver</tissue>
    </source>
</reference>
<reference key="3">
    <citation type="journal article" date="2004" name="Genome Res.">
        <title>The status, quality, and expansion of the NIH full-length cDNA project: the Mammalian Gene Collection (MGC).</title>
        <authorList>
            <consortium name="The MGC Project Team"/>
        </authorList>
    </citation>
    <scope>NUCLEOTIDE SEQUENCE [LARGE SCALE MRNA]</scope>
    <source>
        <strain>FVB/N</strain>
        <tissue>Liver</tissue>
    </source>
</reference>
<reference key="4">
    <citation type="journal article" date="2001" name="Science">
        <title>An apolipoprotein influencing triglycerides in humans and mice revealed by comparative sequencing.</title>
        <authorList>
            <person name="Pennacchio L.A."/>
            <person name="Olivier M."/>
            <person name="Hubacek J.A."/>
            <person name="Cohen J.C."/>
            <person name="Cox D.R."/>
            <person name="Fruchart J.-C."/>
            <person name="Krauss R.M."/>
            <person name="Rubin E.M."/>
        </authorList>
    </citation>
    <scope>FUNCTION</scope>
    <scope>TISSUE SPECIFICITY</scope>
</reference>
<reference key="5">
    <citation type="journal article" date="2004" name="J. Biol. Chem.">
        <title>ApoAV reduces plasma triglycerides by inhibiting very low density lipoprotein-triglyceride (VLDL-TG) production and stimulating lipoprotein lipase-mediated VLDL-TG hydrolysis.</title>
        <authorList>
            <person name="Schaap F.G."/>
            <person name="Rensen P.C.N."/>
            <person name="Voshol P.J."/>
            <person name="Vrins C."/>
            <person name="van der Vliet H.N."/>
            <person name="Chamuleau R.A.F.M."/>
            <person name="Havekes L.M."/>
            <person name="Groen A.K."/>
            <person name="van Dijk K.W."/>
        </authorList>
    </citation>
    <scope>FUNCTION</scope>
</reference>
<reference key="6">
    <citation type="journal article" date="2007" name="Proc. Natl. Acad. Sci. U.S.A.">
        <title>Large-scale phosphorylation analysis of mouse liver.</title>
        <authorList>
            <person name="Villen J."/>
            <person name="Beausoleil S.A."/>
            <person name="Gerber S.A."/>
            <person name="Gygi S.P."/>
        </authorList>
    </citation>
    <scope>PHOSPHORYLATION [LARGE SCALE ANALYSIS] AT SER-52</scope>
    <scope>IDENTIFICATION BY MASS SPECTROMETRY [LARGE SCALE ANALYSIS]</scope>
    <source>
        <tissue>Liver</tissue>
    </source>
</reference>
<reference key="7">
    <citation type="journal article" date="2010" name="Cell">
        <title>A tissue-specific atlas of mouse protein phosphorylation and expression.</title>
        <authorList>
            <person name="Huttlin E.L."/>
            <person name="Jedrychowski M.P."/>
            <person name="Elias J.E."/>
            <person name="Goswami T."/>
            <person name="Rad R."/>
            <person name="Beausoleil S.A."/>
            <person name="Villen J."/>
            <person name="Haas W."/>
            <person name="Sowa M.E."/>
            <person name="Gygi S.P."/>
        </authorList>
    </citation>
    <scope>PHOSPHORYLATION [LARGE SCALE ANALYSIS] AT SER-52</scope>
    <scope>IDENTIFICATION BY MASS SPECTROMETRY [LARGE SCALE ANALYSIS]</scope>
    <source>
        <tissue>Kidney</tissue>
        <tissue>Liver</tissue>
        <tissue>Lung</tissue>
    </source>
</reference>
<organism>
    <name type="scientific">Mus musculus</name>
    <name type="common">Mouse</name>
    <dbReference type="NCBI Taxonomy" id="10090"/>
    <lineage>
        <taxon>Eukaryota</taxon>
        <taxon>Metazoa</taxon>
        <taxon>Chordata</taxon>
        <taxon>Craniata</taxon>
        <taxon>Vertebrata</taxon>
        <taxon>Euteleostomi</taxon>
        <taxon>Mammalia</taxon>
        <taxon>Eutheria</taxon>
        <taxon>Euarchontoglires</taxon>
        <taxon>Glires</taxon>
        <taxon>Rodentia</taxon>
        <taxon>Myomorpha</taxon>
        <taxon>Muroidea</taxon>
        <taxon>Muridae</taxon>
        <taxon>Murinae</taxon>
        <taxon>Mus</taxon>
        <taxon>Mus</taxon>
    </lineage>
</organism>
<keyword id="KW-0162">Chylomicron</keyword>
<keyword id="KW-0175">Coiled coil</keyword>
<keyword id="KW-0967">Endosome</keyword>
<keyword id="KW-0333">Golgi apparatus</keyword>
<keyword id="KW-0345">HDL</keyword>
<keyword id="KW-0445">Lipid transport</keyword>
<keyword id="KW-0597">Phosphoprotein</keyword>
<keyword id="KW-1185">Reference proteome</keyword>
<keyword id="KW-0964">Secreted</keyword>
<keyword id="KW-0732">Signal</keyword>
<keyword id="KW-0813">Transport</keyword>
<keyword id="KW-0850">VLDL</keyword>
<proteinExistence type="evidence at protein level"/>
<evidence type="ECO:0000250" key="1">
    <source>
        <dbReference type="UniProtKB" id="Q6Q788"/>
    </source>
</evidence>
<evidence type="ECO:0000255" key="2"/>
<evidence type="ECO:0000256" key="3">
    <source>
        <dbReference type="SAM" id="MobiDB-lite"/>
    </source>
</evidence>
<evidence type="ECO:0000269" key="4">
    <source>
    </source>
</evidence>
<evidence type="ECO:0000269" key="5">
    <source>
    </source>
</evidence>
<evidence type="ECO:0000269" key="6">
    <source>
    </source>
</evidence>
<evidence type="ECO:0000305" key="7"/>
<evidence type="ECO:0007744" key="8">
    <source>
    </source>
</evidence>
<evidence type="ECO:0007744" key="9">
    <source>
    </source>
</evidence>